<reference key="1">
    <citation type="journal article" date="2009" name="Proc. Natl. Acad. Sci. U.S.A.">
        <title>Biogeography of the Sulfolobus islandicus pan-genome.</title>
        <authorList>
            <person name="Reno M.L."/>
            <person name="Held N.L."/>
            <person name="Fields C.J."/>
            <person name="Burke P.V."/>
            <person name="Whitaker R.J."/>
        </authorList>
    </citation>
    <scope>NUCLEOTIDE SEQUENCE [LARGE SCALE GENOMIC DNA]</scope>
    <source>
        <strain>M.16.4 / Kamchatka #3</strain>
    </source>
</reference>
<proteinExistence type="inferred from homology"/>
<sequence>MVKMVIVVRSDIKMGKGKMAAQVAHAAVTLVISIINSNNSRWKEWLNEWLQQGQPKIVVKANSLDEIILRSKKAETMNLPFSIIEDAGKTQLEPGTITCLGIGPAPENLIDPITGDLKLL</sequence>
<feature type="chain" id="PRO_1000212315" description="Peptidyl-tRNA hydrolase">
    <location>
        <begin position="1"/>
        <end position="120"/>
    </location>
</feature>
<protein>
    <recommendedName>
        <fullName evidence="1">Peptidyl-tRNA hydrolase</fullName>
        <shortName evidence="1">PTH</shortName>
        <ecNumber evidence="1">3.1.1.29</ecNumber>
    </recommendedName>
</protein>
<keyword id="KW-0963">Cytoplasm</keyword>
<keyword id="KW-0378">Hydrolase</keyword>
<evidence type="ECO:0000255" key="1">
    <source>
        <dbReference type="HAMAP-Rule" id="MF_00628"/>
    </source>
</evidence>
<dbReference type="EC" id="3.1.1.29" evidence="1"/>
<dbReference type="EMBL" id="CP001402">
    <property type="protein sequence ID" value="ACR42573.1"/>
    <property type="molecule type" value="Genomic_DNA"/>
</dbReference>
<dbReference type="SMR" id="C4KJ09"/>
<dbReference type="KEGG" id="sid:M164_1970"/>
<dbReference type="HOGENOM" id="CLU_073661_2_2_2"/>
<dbReference type="Proteomes" id="UP000001479">
    <property type="component" value="Chromosome"/>
</dbReference>
<dbReference type="GO" id="GO:0005829">
    <property type="term" value="C:cytosol"/>
    <property type="evidence" value="ECO:0007669"/>
    <property type="project" value="TreeGrafter"/>
</dbReference>
<dbReference type="GO" id="GO:0004045">
    <property type="term" value="F:peptidyl-tRNA hydrolase activity"/>
    <property type="evidence" value="ECO:0007669"/>
    <property type="project" value="UniProtKB-UniRule"/>
</dbReference>
<dbReference type="GO" id="GO:0006412">
    <property type="term" value="P:translation"/>
    <property type="evidence" value="ECO:0007669"/>
    <property type="project" value="UniProtKB-UniRule"/>
</dbReference>
<dbReference type="CDD" id="cd02430">
    <property type="entry name" value="PTH2"/>
    <property type="match status" value="1"/>
</dbReference>
<dbReference type="FunFam" id="3.40.1490.10:FF:000001">
    <property type="entry name" value="Peptidyl-tRNA hydrolase 2"/>
    <property type="match status" value="1"/>
</dbReference>
<dbReference type="Gene3D" id="3.40.1490.10">
    <property type="entry name" value="Bit1"/>
    <property type="match status" value="1"/>
</dbReference>
<dbReference type="HAMAP" id="MF_00628">
    <property type="entry name" value="Pept_tRNA_hydro_arch"/>
    <property type="match status" value="1"/>
</dbReference>
<dbReference type="InterPro" id="IPR023476">
    <property type="entry name" value="Pep_tRNA_hydro_II_dom_sf"/>
</dbReference>
<dbReference type="InterPro" id="IPR034759">
    <property type="entry name" value="Pept_tRNA_hydro_arch"/>
</dbReference>
<dbReference type="InterPro" id="IPR002833">
    <property type="entry name" value="PTH2"/>
</dbReference>
<dbReference type="NCBIfam" id="TIGR00283">
    <property type="entry name" value="arch_pth2"/>
    <property type="match status" value="1"/>
</dbReference>
<dbReference type="NCBIfam" id="NF003314">
    <property type="entry name" value="PRK04322.1"/>
    <property type="match status" value="1"/>
</dbReference>
<dbReference type="PANTHER" id="PTHR12649">
    <property type="entry name" value="PEPTIDYL-TRNA HYDROLASE 2"/>
    <property type="match status" value="1"/>
</dbReference>
<dbReference type="PANTHER" id="PTHR12649:SF11">
    <property type="entry name" value="PEPTIDYL-TRNA HYDROLASE 2, MITOCHONDRIAL"/>
    <property type="match status" value="1"/>
</dbReference>
<dbReference type="Pfam" id="PF01981">
    <property type="entry name" value="PTH2"/>
    <property type="match status" value="1"/>
</dbReference>
<dbReference type="SUPFAM" id="SSF102462">
    <property type="entry name" value="Peptidyl-tRNA hydrolase II"/>
    <property type="match status" value="1"/>
</dbReference>
<gene>
    <name evidence="1" type="primary">pth</name>
    <name type="ordered locus">M164_1970</name>
</gene>
<organism>
    <name type="scientific">Saccharolobus islandicus (strain M.16.4 / Kamchatka #3)</name>
    <name type="common">Sulfolobus islandicus</name>
    <dbReference type="NCBI Taxonomy" id="426118"/>
    <lineage>
        <taxon>Archaea</taxon>
        <taxon>Thermoproteota</taxon>
        <taxon>Thermoprotei</taxon>
        <taxon>Sulfolobales</taxon>
        <taxon>Sulfolobaceae</taxon>
        <taxon>Saccharolobus</taxon>
    </lineage>
</organism>
<name>PTH_SACI6</name>
<comment type="function">
    <text evidence="1">The natural substrate for this enzyme may be peptidyl-tRNAs which drop off the ribosome during protein synthesis.</text>
</comment>
<comment type="catalytic activity">
    <reaction evidence="1">
        <text>an N-acyl-L-alpha-aminoacyl-tRNA + H2O = an N-acyl-L-amino acid + a tRNA + H(+)</text>
        <dbReference type="Rhea" id="RHEA:54448"/>
        <dbReference type="Rhea" id="RHEA-COMP:10123"/>
        <dbReference type="Rhea" id="RHEA-COMP:13883"/>
        <dbReference type="ChEBI" id="CHEBI:15377"/>
        <dbReference type="ChEBI" id="CHEBI:15378"/>
        <dbReference type="ChEBI" id="CHEBI:59874"/>
        <dbReference type="ChEBI" id="CHEBI:78442"/>
        <dbReference type="ChEBI" id="CHEBI:138191"/>
        <dbReference type="EC" id="3.1.1.29"/>
    </reaction>
</comment>
<comment type="subcellular location">
    <subcellularLocation>
        <location evidence="1">Cytoplasm</location>
    </subcellularLocation>
</comment>
<comment type="similarity">
    <text evidence="1">Belongs to the PTH2 family.</text>
</comment>
<accession>C4KJ09</accession>